<proteinExistence type="evidence at transcript level"/>
<sequence>MKLLALFPFLAIVIQLSCWELGTDALPSGGFVRTKGVQFSLNGYPYYANGFNAYWLMYVASDPSQRSKISTAFQDASRHGLTVARTWAFSDGGYRALQYSPGSYNEDMFQGLDFALAEARRHGIKIILSFANNYESFGGRKQYVDWARSRGRPVSSEDDFFTDSLVKDFYKNHIKAVLNRFNTFTKVHYKDDPTIMAWELMNEPRCPSDPSGRAIQAWITEMAAHVKSLDRNHLLEAGLEGFYGQSSPQSKTLNPPGQFGTDFIANNRIPGIDFVTVHSYPDEWFPDSSEQSQMDFLNKWLDAHIQDAQNVLHKPIILAEFGKSMKKPGYTPAQRDIVFNTVYSKIYGSAKRGGAAAGGLFWQLLVNGIDNFQDGYGIILSQSSSTVNVISQQSRKLTLIRKIFARMINVEKWKRARGQGQVGKRGHKINN</sequence>
<comment type="function">
    <text evidence="5">Required for both, loosening of the micropylar endosperm, and rupture of the seed coat in germinating seeds. May participate in the hydrolysis of the mannans in the cell wall of germinating seeds.</text>
</comment>
<comment type="catalytic activity">
    <reaction>
        <text>Random hydrolysis of (1-&gt;4)-beta-D-mannosidic linkages in mannans, galactomannans and glucomannans.</text>
        <dbReference type="EC" id="3.2.1.78"/>
    </reaction>
</comment>
<comment type="subcellular location">
    <subcellularLocation>
        <location evidence="5 6">Secreted</location>
    </subcellularLocation>
</comment>
<comment type="tissue specificity">
    <text evidence="4 5">Expressed in stems, flowers, siliques and seeds (PubMed:16897088). Expressed in root vasculature, leaf hydathodes, anther filaments, stigma, sepal vasculature, at the base and apical parts of siliques, and replum. Expressed in the micropylar endosperm and radicle tip in early germinating seeds (PubMed:23461773).</text>
</comment>
<comment type="induction">
    <text evidence="5">By gibberellin in germinating seeds.</text>
</comment>
<comment type="similarity">
    <text evidence="6">Belongs to the glycosyl hydrolase 5 (cellulase A) family.</text>
</comment>
<feature type="signal peptide" evidence="3">
    <location>
        <begin position="1"/>
        <end position="25"/>
    </location>
</feature>
<feature type="chain" id="PRO_0000277480" description="Mannan endo-1,4-beta-mannosidase 7">
    <location>
        <begin position="26"/>
        <end position="431"/>
    </location>
</feature>
<feature type="active site" description="Proton donor" evidence="1">
    <location>
        <position position="203"/>
    </location>
</feature>
<feature type="active site" description="Nucleophile" evidence="1">
    <location>
        <position position="320"/>
    </location>
</feature>
<feature type="binding site" evidence="2">
    <location>
        <position position="87"/>
    </location>
    <ligand>
        <name>substrate</name>
    </ligand>
</feature>
<feature type="binding site" evidence="2">
    <location>
        <position position="202"/>
    </location>
    <ligand>
        <name>substrate</name>
    </ligand>
</feature>
<feature type="binding site" evidence="2">
    <location>
        <position position="280"/>
    </location>
    <ligand>
        <name>substrate</name>
    </ligand>
</feature>
<feature type="binding site" evidence="2">
    <location>
        <position position="362"/>
    </location>
    <ligand>
        <name>substrate</name>
    </ligand>
</feature>
<accession>Q9FJZ3</accession>
<organism>
    <name type="scientific">Arabidopsis thaliana</name>
    <name type="common">Mouse-ear cress</name>
    <dbReference type="NCBI Taxonomy" id="3702"/>
    <lineage>
        <taxon>Eukaryota</taxon>
        <taxon>Viridiplantae</taxon>
        <taxon>Streptophyta</taxon>
        <taxon>Embryophyta</taxon>
        <taxon>Tracheophyta</taxon>
        <taxon>Spermatophyta</taxon>
        <taxon>Magnoliopsida</taxon>
        <taxon>eudicotyledons</taxon>
        <taxon>Gunneridae</taxon>
        <taxon>Pentapetalae</taxon>
        <taxon>rosids</taxon>
        <taxon>malvids</taxon>
        <taxon>Brassicales</taxon>
        <taxon>Brassicaceae</taxon>
        <taxon>Camelineae</taxon>
        <taxon>Arabidopsis</taxon>
    </lineage>
</organism>
<reference key="1">
    <citation type="journal article" date="1998" name="DNA Res.">
        <title>Structural analysis of Arabidopsis thaliana chromosome 5. VI. Sequence features of the regions of 1,367,185 bp covered by 19 physically assigned P1 and TAC clones.</title>
        <authorList>
            <person name="Kotani H."/>
            <person name="Nakamura Y."/>
            <person name="Sato S."/>
            <person name="Asamizu E."/>
            <person name="Kaneko T."/>
            <person name="Miyajima N."/>
            <person name="Tabata S."/>
        </authorList>
    </citation>
    <scope>NUCLEOTIDE SEQUENCE [LARGE SCALE GENOMIC DNA]</scope>
    <source>
        <strain>cv. Columbia</strain>
    </source>
</reference>
<reference key="2">
    <citation type="journal article" date="2017" name="Plant J.">
        <title>Araport11: a complete reannotation of the Arabidopsis thaliana reference genome.</title>
        <authorList>
            <person name="Cheng C.Y."/>
            <person name="Krishnakumar V."/>
            <person name="Chan A.P."/>
            <person name="Thibaud-Nissen F."/>
            <person name="Schobel S."/>
            <person name="Town C.D."/>
        </authorList>
    </citation>
    <scope>GENOME REANNOTATION</scope>
    <source>
        <strain>cv. Columbia</strain>
    </source>
</reference>
<reference key="3">
    <citation type="journal article" date="2003" name="Science">
        <title>Empirical analysis of transcriptional activity in the Arabidopsis genome.</title>
        <authorList>
            <person name="Yamada K."/>
            <person name="Lim J."/>
            <person name="Dale J.M."/>
            <person name="Chen H."/>
            <person name="Shinn P."/>
            <person name="Palm C.J."/>
            <person name="Southwick A.M."/>
            <person name="Wu H.C."/>
            <person name="Kim C.J."/>
            <person name="Nguyen M."/>
            <person name="Pham P.K."/>
            <person name="Cheuk R.F."/>
            <person name="Karlin-Newmann G."/>
            <person name="Liu S.X."/>
            <person name="Lam B."/>
            <person name="Sakano H."/>
            <person name="Wu T."/>
            <person name="Yu G."/>
            <person name="Miranda M."/>
            <person name="Quach H.L."/>
            <person name="Tripp M."/>
            <person name="Chang C.H."/>
            <person name="Lee J.M."/>
            <person name="Toriumi M.J."/>
            <person name="Chan M.M."/>
            <person name="Tang C.C."/>
            <person name="Onodera C.S."/>
            <person name="Deng J.M."/>
            <person name="Akiyama K."/>
            <person name="Ansari Y."/>
            <person name="Arakawa T."/>
            <person name="Banh J."/>
            <person name="Banno F."/>
            <person name="Bowser L."/>
            <person name="Brooks S.Y."/>
            <person name="Carninci P."/>
            <person name="Chao Q."/>
            <person name="Choy N."/>
            <person name="Enju A."/>
            <person name="Goldsmith A.D."/>
            <person name="Gurjal M."/>
            <person name="Hansen N.F."/>
            <person name="Hayashizaki Y."/>
            <person name="Johnson-Hopson C."/>
            <person name="Hsuan V.W."/>
            <person name="Iida K."/>
            <person name="Karnes M."/>
            <person name="Khan S."/>
            <person name="Koesema E."/>
            <person name="Ishida J."/>
            <person name="Jiang P.X."/>
            <person name="Jones T."/>
            <person name="Kawai J."/>
            <person name="Kamiya A."/>
            <person name="Meyers C."/>
            <person name="Nakajima M."/>
            <person name="Narusaka M."/>
            <person name="Seki M."/>
            <person name="Sakurai T."/>
            <person name="Satou M."/>
            <person name="Tamse R."/>
            <person name="Vaysberg M."/>
            <person name="Wallender E.K."/>
            <person name="Wong C."/>
            <person name="Yamamura Y."/>
            <person name="Yuan S."/>
            <person name="Shinozaki K."/>
            <person name="Davis R.W."/>
            <person name="Theologis A."/>
            <person name="Ecker J.R."/>
        </authorList>
    </citation>
    <scope>NUCLEOTIDE SEQUENCE [LARGE SCALE MRNA]</scope>
    <source>
        <strain>cv. Columbia</strain>
    </source>
</reference>
<reference key="4">
    <citation type="journal article" date="2007" name="Funct. Integr. Genomics">
        <title>The endo-beta-mannanase gene families in Arabidopsis, rice, and poplar.</title>
        <authorList>
            <person name="Yuan J.S."/>
            <person name="Yang X."/>
            <person name="Lai J."/>
            <person name="Lin H."/>
            <person name="Cheng Z.-M."/>
            <person name="Nonogaki H."/>
            <person name="Chen F."/>
        </authorList>
    </citation>
    <scope>GENE FAMILY</scope>
    <scope>TISSUE SPECIFICITY</scope>
</reference>
<reference key="5">
    <citation type="journal article" date="2013" name="Plant J.">
        <title>Arabidopsis thaliana bZIP44: a transcription factor affecting seed germination and expression of the mannanase-encoding gene AtMAN7.</title>
        <authorList>
            <person name="Iglesias-Fernandez R."/>
            <person name="Barrero-Sicilia C."/>
            <person name="Carrillo-Barral N."/>
            <person name="Onate-Sanchez L."/>
            <person name="Carbonero P."/>
        </authorList>
    </citation>
    <scope>FUNCTION</scope>
    <scope>SUBCELLULAR LOCATION</scope>
    <scope>TISSUE SPECIFICITY</scope>
    <scope>INDUCTION BY GIBBERELLIN</scope>
</reference>
<gene>
    <name type="primary">MAN7</name>
    <name type="ordered locus">At5g66460</name>
    <name type="ORF">K1F13.12</name>
</gene>
<keyword id="KW-0326">Glycosidase</keyword>
<keyword id="KW-0378">Hydrolase</keyword>
<keyword id="KW-1185">Reference proteome</keyword>
<keyword id="KW-0964">Secreted</keyword>
<keyword id="KW-0732">Signal</keyword>
<protein>
    <recommendedName>
        <fullName>Mannan endo-1,4-beta-mannosidase 7</fullName>
        <ecNumber>3.2.1.78</ecNumber>
    </recommendedName>
    <alternativeName>
        <fullName>Beta-mannanase 7</fullName>
    </alternativeName>
    <alternativeName>
        <fullName>Endo-beta-1,4-mannanase 7</fullName>
        <shortName>AtMAN7</shortName>
    </alternativeName>
</protein>
<name>MAN7_ARATH</name>
<evidence type="ECO:0000250" key="1">
    <source>
        <dbReference type="UniProtKB" id="B3A0S5"/>
    </source>
</evidence>
<evidence type="ECO:0000250" key="2">
    <source>
        <dbReference type="UniProtKB" id="B4XC07"/>
    </source>
</evidence>
<evidence type="ECO:0000255" key="3"/>
<evidence type="ECO:0000269" key="4">
    <source>
    </source>
</evidence>
<evidence type="ECO:0000269" key="5">
    <source>
    </source>
</evidence>
<evidence type="ECO:0000305" key="6"/>
<dbReference type="EC" id="3.2.1.78"/>
<dbReference type="EMBL" id="AB013389">
    <property type="protein sequence ID" value="BAB10922.1"/>
    <property type="molecule type" value="Genomic_DNA"/>
</dbReference>
<dbReference type="EMBL" id="CP002688">
    <property type="protein sequence ID" value="AED98217.1"/>
    <property type="molecule type" value="Genomic_DNA"/>
</dbReference>
<dbReference type="EMBL" id="BT000452">
    <property type="protein sequence ID" value="AAN17429.1"/>
    <property type="molecule type" value="mRNA"/>
</dbReference>
<dbReference type="EMBL" id="BT008749">
    <property type="protein sequence ID" value="AAP49511.1"/>
    <property type="molecule type" value="mRNA"/>
</dbReference>
<dbReference type="RefSeq" id="NP_201447.1">
    <property type="nucleotide sequence ID" value="NM_126044.4"/>
</dbReference>
<dbReference type="SMR" id="Q9FJZ3"/>
<dbReference type="BioGRID" id="22020">
    <property type="interactions" value="1"/>
</dbReference>
<dbReference type="FunCoup" id="Q9FJZ3">
    <property type="interactions" value="101"/>
</dbReference>
<dbReference type="IntAct" id="Q9FJZ3">
    <property type="interactions" value="2"/>
</dbReference>
<dbReference type="STRING" id="3702.Q9FJZ3"/>
<dbReference type="CAZy" id="GH5">
    <property type="family name" value="Glycoside Hydrolase Family 5"/>
</dbReference>
<dbReference type="iPTMnet" id="Q9FJZ3"/>
<dbReference type="PaxDb" id="3702-AT5G66460.1"/>
<dbReference type="ProteomicsDB" id="238235"/>
<dbReference type="EnsemblPlants" id="AT5G66460.1">
    <property type="protein sequence ID" value="AT5G66460.1"/>
    <property type="gene ID" value="AT5G66460"/>
</dbReference>
<dbReference type="GeneID" id="836778"/>
<dbReference type="Gramene" id="AT5G66460.1">
    <property type="protein sequence ID" value="AT5G66460.1"/>
    <property type="gene ID" value="AT5G66460"/>
</dbReference>
<dbReference type="KEGG" id="ath:AT5G66460"/>
<dbReference type="Araport" id="AT5G66460"/>
<dbReference type="TAIR" id="AT5G66460">
    <property type="gene designation" value="MAN7"/>
</dbReference>
<dbReference type="eggNOG" id="ENOG502QS4Q">
    <property type="taxonomic scope" value="Eukaryota"/>
</dbReference>
<dbReference type="HOGENOM" id="CLU_031603_0_0_1"/>
<dbReference type="InParanoid" id="Q9FJZ3"/>
<dbReference type="OMA" id="TPQPFRM"/>
<dbReference type="PhylomeDB" id="Q9FJZ3"/>
<dbReference type="BioCyc" id="ARA:AT5G66460-MONOMER"/>
<dbReference type="BRENDA" id="3.2.1.78">
    <property type="organism ID" value="399"/>
</dbReference>
<dbReference type="PRO" id="PR:Q9FJZ3"/>
<dbReference type="Proteomes" id="UP000006548">
    <property type="component" value="Chromosome 5"/>
</dbReference>
<dbReference type="ExpressionAtlas" id="Q9FJZ3">
    <property type="expression patterns" value="baseline and differential"/>
</dbReference>
<dbReference type="GO" id="GO:0071944">
    <property type="term" value="C:cell periphery"/>
    <property type="evidence" value="ECO:0000314"/>
    <property type="project" value="TAIR"/>
</dbReference>
<dbReference type="GO" id="GO:0005576">
    <property type="term" value="C:extracellular region"/>
    <property type="evidence" value="ECO:0007669"/>
    <property type="project" value="UniProtKB-SubCell"/>
</dbReference>
<dbReference type="GO" id="GO:0016985">
    <property type="term" value="F:mannan endo-1,4-beta-mannosidase activity"/>
    <property type="evidence" value="ECO:0000314"/>
    <property type="project" value="TAIR"/>
</dbReference>
<dbReference type="GO" id="GO:0010047">
    <property type="term" value="P:fruit dehiscence"/>
    <property type="evidence" value="ECO:0000316"/>
    <property type="project" value="TAIR"/>
</dbReference>
<dbReference type="GO" id="GO:1990059">
    <property type="term" value="P:fruit valve development"/>
    <property type="evidence" value="ECO:0000316"/>
    <property type="project" value="TAIR"/>
</dbReference>
<dbReference type="GO" id="GO:0009828">
    <property type="term" value="P:plant-type cell wall loosening"/>
    <property type="evidence" value="ECO:0000316"/>
    <property type="project" value="TAIR"/>
</dbReference>
<dbReference type="GO" id="GO:0000272">
    <property type="term" value="P:polysaccharide catabolic process"/>
    <property type="evidence" value="ECO:0007669"/>
    <property type="project" value="InterPro"/>
</dbReference>
<dbReference type="GO" id="GO:0009845">
    <property type="term" value="P:seed germination"/>
    <property type="evidence" value="ECO:0000315"/>
    <property type="project" value="TAIR"/>
</dbReference>
<dbReference type="FunFam" id="3.20.20.80:FF:000012">
    <property type="entry name" value="Mannan endo-1,4-beta-mannosidase 6"/>
    <property type="match status" value="1"/>
</dbReference>
<dbReference type="Gene3D" id="3.20.20.80">
    <property type="entry name" value="Glycosidases"/>
    <property type="match status" value="1"/>
</dbReference>
<dbReference type="InterPro" id="IPR001547">
    <property type="entry name" value="Glyco_hydro_5"/>
</dbReference>
<dbReference type="InterPro" id="IPR017853">
    <property type="entry name" value="Glycoside_hydrolase_SF"/>
</dbReference>
<dbReference type="InterPro" id="IPR045053">
    <property type="entry name" value="MAN-like"/>
</dbReference>
<dbReference type="PANTHER" id="PTHR31451">
    <property type="match status" value="1"/>
</dbReference>
<dbReference type="PANTHER" id="PTHR31451:SF64">
    <property type="entry name" value="MANNAN ENDO-1,4-BETA-MANNOSIDASE 7"/>
    <property type="match status" value="1"/>
</dbReference>
<dbReference type="Pfam" id="PF00150">
    <property type="entry name" value="Cellulase"/>
    <property type="match status" value="1"/>
</dbReference>
<dbReference type="SUPFAM" id="SSF51445">
    <property type="entry name" value="(Trans)glycosidases"/>
    <property type="match status" value="1"/>
</dbReference>